<keyword id="KW-0046">Antibiotic resistance</keyword>
<keyword id="KW-0997">Cell inner membrane</keyword>
<keyword id="KW-1003">Cell membrane</keyword>
<keyword id="KW-0133">Cell shape</keyword>
<keyword id="KW-0961">Cell wall biogenesis/degradation</keyword>
<keyword id="KW-0378">Hydrolase</keyword>
<keyword id="KW-0472">Membrane</keyword>
<keyword id="KW-0573">Peptidoglycan synthesis</keyword>
<keyword id="KW-0812">Transmembrane</keyword>
<keyword id="KW-1133">Transmembrane helix</keyword>
<protein>
    <recommendedName>
        <fullName evidence="1">Undecaprenyl-diphosphatase</fullName>
        <ecNumber evidence="1">3.6.1.27</ecNumber>
    </recommendedName>
    <alternativeName>
        <fullName evidence="1">Bacitracin resistance protein</fullName>
    </alternativeName>
    <alternativeName>
        <fullName evidence="1">Undecaprenyl pyrophosphate phosphatase</fullName>
    </alternativeName>
</protein>
<name>UPPP_BORPD</name>
<sequence length="287" mass="31035">MTDSTLYLIKAFFLGIIEGLTEFIPVSSTGHLILIGDWINFTSSSGKVFEVVIQFGSILAVMWIFRARLWQLIRGTLTGVPAETAFTRNLLLAFLPAAVVGAIFIKTIKQVFYHPGVVAVTLVLGGLIMLWVERKTHHTPGDAPGAADDTASDERASAHTLEQISWKQALGVGVAQCLAMVPGTSRSGATIIGGMIAGIQRKTATEFSFFLAMPTMLGAATYDLYRNIDLLSQHDLSAIAVGFAAAFISALVVVRAVLRFVANHTYRGFAWYRIALGIVVAAWLMTK</sequence>
<evidence type="ECO:0000255" key="1">
    <source>
        <dbReference type="HAMAP-Rule" id="MF_01006"/>
    </source>
</evidence>
<organism>
    <name type="scientific">Bordetella petrii (strain ATCC BAA-461 / DSM 12804 / CCUG 43448)</name>
    <dbReference type="NCBI Taxonomy" id="340100"/>
    <lineage>
        <taxon>Bacteria</taxon>
        <taxon>Pseudomonadati</taxon>
        <taxon>Pseudomonadota</taxon>
        <taxon>Betaproteobacteria</taxon>
        <taxon>Burkholderiales</taxon>
        <taxon>Alcaligenaceae</taxon>
        <taxon>Bordetella</taxon>
    </lineage>
</organism>
<comment type="function">
    <text evidence="1">Catalyzes the dephosphorylation of undecaprenyl diphosphate (UPP). Confers resistance to bacitracin.</text>
</comment>
<comment type="catalytic activity">
    <reaction evidence="1">
        <text>di-trans,octa-cis-undecaprenyl diphosphate + H2O = di-trans,octa-cis-undecaprenyl phosphate + phosphate + H(+)</text>
        <dbReference type="Rhea" id="RHEA:28094"/>
        <dbReference type="ChEBI" id="CHEBI:15377"/>
        <dbReference type="ChEBI" id="CHEBI:15378"/>
        <dbReference type="ChEBI" id="CHEBI:43474"/>
        <dbReference type="ChEBI" id="CHEBI:58405"/>
        <dbReference type="ChEBI" id="CHEBI:60392"/>
        <dbReference type="EC" id="3.6.1.27"/>
    </reaction>
</comment>
<comment type="subcellular location">
    <subcellularLocation>
        <location evidence="1">Cell inner membrane</location>
        <topology evidence="1">Multi-pass membrane protein</topology>
    </subcellularLocation>
</comment>
<comment type="miscellaneous">
    <text>Bacitracin is thought to be involved in the inhibition of peptidoglycan synthesis by sequestering undecaprenyl diphosphate, thereby reducing the pool of lipid carrier available.</text>
</comment>
<comment type="similarity">
    <text evidence="1">Belongs to the UppP family.</text>
</comment>
<accession>A9HXK3</accession>
<dbReference type="EC" id="3.6.1.27" evidence="1"/>
<dbReference type="EMBL" id="AM902716">
    <property type="protein sequence ID" value="CAP43798.1"/>
    <property type="molecule type" value="Genomic_DNA"/>
</dbReference>
<dbReference type="SMR" id="A9HXK3"/>
<dbReference type="STRING" id="94624.Bpet3455"/>
<dbReference type="KEGG" id="bpt:Bpet3455"/>
<dbReference type="eggNOG" id="COG1968">
    <property type="taxonomic scope" value="Bacteria"/>
</dbReference>
<dbReference type="Proteomes" id="UP000001225">
    <property type="component" value="Chromosome"/>
</dbReference>
<dbReference type="GO" id="GO:0005886">
    <property type="term" value="C:plasma membrane"/>
    <property type="evidence" value="ECO:0007669"/>
    <property type="project" value="UniProtKB-SubCell"/>
</dbReference>
<dbReference type="GO" id="GO:0050380">
    <property type="term" value="F:undecaprenyl-diphosphatase activity"/>
    <property type="evidence" value="ECO:0007669"/>
    <property type="project" value="UniProtKB-UniRule"/>
</dbReference>
<dbReference type="GO" id="GO:0071555">
    <property type="term" value="P:cell wall organization"/>
    <property type="evidence" value="ECO:0007669"/>
    <property type="project" value="UniProtKB-KW"/>
</dbReference>
<dbReference type="GO" id="GO:0009252">
    <property type="term" value="P:peptidoglycan biosynthetic process"/>
    <property type="evidence" value="ECO:0007669"/>
    <property type="project" value="UniProtKB-KW"/>
</dbReference>
<dbReference type="GO" id="GO:0008360">
    <property type="term" value="P:regulation of cell shape"/>
    <property type="evidence" value="ECO:0007669"/>
    <property type="project" value="UniProtKB-KW"/>
</dbReference>
<dbReference type="GO" id="GO:0046677">
    <property type="term" value="P:response to antibiotic"/>
    <property type="evidence" value="ECO:0007669"/>
    <property type="project" value="UniProtKB-UniRule"/>
</dbReference>
<dbReference type="HAMAP" id="MF_01006">
    <property type="entry name" value="Undec_diphosphatase"/>
    <property type="match status" value="1"/>
</dbReference>
<dbReference type="InterPro" id="IPR003824">
    <property type="entry name" value="UppP"/>
</dbReference>
<dbReference type="NCBIfam" id="NF001389">
    <property type="entry name" value="PRK00281.1-2"/>
    <property type="match status" value="1"/>
</dbReference>
<dbReference type="NCBIfam" id="NF001390">
    <property type="entry name" value="PRK00281.1-4"/>
    <property type="match status" value="1"/>
</dbReference>
<dbReference type="PANTHER" id="PTHR30622">
    <property type="entry name" value="UNDECAPRENYL-DIPHOSPHATASE"/>
    <property type="match status" value="1"/>
</dbReference>
<dbReference type="PANTHER" id="PTHR30622:SF3">
    <property type="entry name" value="UNDECAPRENYL-DIPHOSPHATASE"/>
    <property type="match status" value="1"/>
</dbReference>
<dbReference type="Pfam" id="PF02673">
    <property type="entry name" value="BacA"/>
    <property type="match status" value="1"/>
</dbReference>
<proteinExistence type="inferred from homology"/>
<reference key="1">
    <citation type="journal article" date="2008" name="BMC Genomics">
        <title>The missing link: Bordetella petrii is endowed with both the metabolic versatility of environmental bacteria and virulence traits of pathogenic Bordetellae.</title>
        <authorList>
            <person name="Gross R."/>
            <person name="Guzman C.A."/>
            <person name="Sebaihia M."/>
            <person name="Martin dos Santos V.A.P."/>
            <person name="Pieper D.H."/>
            <person name="Koebnik R."/>
            <person name="Lechner M."/>
            <person name="Bartels D."/>
            <person name="Buhrmester J."/>
            <person name="Choudhuri J.V."/>
            <person name="Ebensen T."/>
            <person name="Gaigalat L."/>
            <person name="Herrmann S."/>
            <person name="Khachane A.N."/>
            <person name="Larisch C."/>
            <person name="Link S."/>
            <person name="Linke B."/>
            <person name="Meyer F."/>
            <person name="Mormann S."/>
            <person name="Nakunst D."/>
            <person name="Rueckert C."/>
            <person name="Schneiker-Bekel S."/>
            <person name="Schulze K."/>
            <person name="Voerholter F.-J."/>
            <person name="Yevsa T."/>
            <person name="Engle J.T."/>
            <person name="Goldman W.E."/>
            <person name="Puehler A."/>
            <person name="Goebel U.B."/>
            <person name="Goesmann A."/>
            <person name="Bloecker H."/>
            <person name="Kaiser O."/>
            <person name="Martinez-Arias R."/>
        </authorList>
    </citation>
    <scope>NUCLEOTIDE SEQUENCE [LARGE SCALE GENOMIC DNA]</scope>
    <source>
        <strain>ATCC BAA-461 / DSM 12804 / CCUG 43448</strain>
    </source>
</reference>
<gene>
    <name evidence="1" type="primary">uppP</name>
    <name type="ordered locus">Bpet3455</name>
</gene>
<feature type="chain" id="PRO_1000197349" description="Undecaprenyl-diphosphatase">
    <location>
        <begin position="1"/>
        <end position="287"/>
    </location>
</feature>
<feature type="transmembrane region" description="Helical" evidence="1">
    <location>
        <begin position="6"/>
        <end position="26"/>
    </location>
</feature>
<feature type="transmembrane region" description="Helical" evidence="1">
    <location>
        <begin position="45"/>
        <end position="65"/>
    </location>
</feature>
<feature type="transmembrane region" description="Helical" evidence="1">
    <location>
        <begin position="85"/>
        <end position="105"/>
    </location>
</feature>
<feature type="transmembrane region" description="Helical" evidence="1">
    <location>
        <begin position="111"/>
        <end position="131"/>
    </location>
</feature>
<feature type="transmembrane region" description="Helical" evidence="1">
    <location>
        <begin position="204"/>
        <end position="224"/>
    </location>
</feature>
<feature type="transmembrane region" description="Helical" evidence="1">
    <location>
        <begin position="238"/>
        <end position="258"/>
    </location>
</feature>
<feature type="transmembrane region" description="Helical" evidence="1">
    <location>
        <begin position="265"/>
        <end position="285"/>
    </location>
</feature>